<dbReference type="EMBL" id="CP000872">
    <property type="protein sequence ID" value="ABX61417.1"/>
    <property type="molecule type" value="Genomic_DNA"/>
</dbReference>
<dbReference type="RefSeq" id="WP_002963483.1">
    <property type="nucleotide sequence ID" value="NC_010103.1"/>
</dbReference>
<dbReference type="SMR" id="A9M8A1"/>
<dbReference type="GeneID" id="97534292"/>
<dbReference type="KEGG" id="bcs:BCAN_A0327"/>
<dbReference type="HOGENOM" id="CLU_095787_0_1_5"/>
<dbReference type="PhylomeDB" id="A9M8A1"/>
<dbReference type="Proteomes" id="UP000001385">
    <property type="component" value="Chromosome I"/>
</dbReference>
<dbReference type="GO" id="GO:0005886">
    <property type="term" value="C:plasma membrane"/>
    <property type="evidence" value="ECO:0007669"/>
    <property type="project" value="UniProtKB-SubCell"/>
</dbReference>
<dbReference type="GO" id="GO:0008381">
    <property type="term" value="F:mechanosensitive monoatomic ion channel activity"/>
    <property type="evidence" value="ECO:0007669"/>
    <property type="project" value="UniProtKB-UniRule"/>
</dbReference>
<dbReference type="Gene3D" id="1.10.1200.120">
    <property type="entry name" value="Large-conductance mechanosensitive channel, MscL, domain 1"/>
    <property type="match status" value="1"/>
</dbReference>
<dbReference type="HAMAP" id="MF_00115">
    <property type="entry name" value="MscL"/>
    <property type="match status" value="1"/>
</dbReference>
<dbReference type="InterPro" id="IPR019823">
    <property type="entry name" value="Mechanosensitive_channel_CS"/>
</dbReference>
<dbReference type="InterPro" id="IPR001185">
    <property type="entry name" value="MS_channel"/>
</dbReference>
<dbReference type="InterPro" id="IPR037673">
    <property type="entry name" value="MSC/AndL"/>
</dbReference>
<dbReference type="InterPro" id="IPR036019">
    <property type="entry name" value="MscL_channel"/>
</dbReference>
<dbReference type="NCBIfam" id="TIGR00220">
    <property type="entry name" value="mscL"/>
    <property type="match status" value="1"/>
</dbReference>
<dbReference type="NCBIfam" id="NF001843">
    <property type="entry name" value="PRK00567.1-4"/>
    <property type="match status" value="1"/>
</dbReference>
<dbReference type="NCBIfam" id="NF010557">
    <property type="entry name" value="PRK13952.1"/>
    <property type="match status" value="1"/>
</dbReference>
<dbReference type="PANTHER" id="PTHR30266:SF2">
    <property type="entry name" value="LARGE-CONDUCTANCE MECHANOSENSITIVE CHANNEL"/>
    <property type="match status" value="1"/>
</dbReference>
<dbReference type="PANTHER" id="PTHR30266">
    <property type="entry name" value="MECHANOSENSITIVE CHANNEL MSCL"/>
    <property type="match status" value="1"/>
</dbReference>
<dbReference type="Pfam" id="PF01741">
    <property type="entry name" value="MscL"/>
    <property type="match status" value="1"/>
</dbReference>
<dbReference type="PRINTS" id="PR01264">
    <property type="entry name" value="MECHCHANNEL"/>
</dbReference>
<dbReference type="SUPFAM" id="SSF81330">
    <property type="entry name" value="Gated mechanosensitive channel"/>
    <property type="match status" value="1"/>
</dbReference>
<dbReference type="PROSITE" id="PS01327">
    <property type="entry name" value="MSCL"/>
    <property type="match status" value="1"/>
</dbReference>
<protein>
    <recommendedName>
        <fullName evidence="1">Large-conductance mechanosensitive channel</fullName>
    </recommendedName>
</protein>
<keyword id="KW-0997">Cell inner membrane</keyword>
<keyword id="KW-1003">Cell membrane</keyword>
<keyword id="KW-0407">Ion channel</keyword>
<keyword id="KW-0406">Ion transport</keyword>
<keyword id="KW-0472">Membrane</keyword>
<keyword id="KW-1185">Reference proteome</keyword>
<keyword id="KW-0812">Transmembrane</keyword>
<keyword id="KW-1133">Transmembrane helix</keyword>
<keyword id="KW-0813">Transport</keyword>
<gene>
    <name evidence="1" type="primary">mscL</name>
    <name type="ordered locus">BCAN_A0327</name>
</gene>
<organism>
    <name type="scientific">Brucella canis (strain ATCC 23365 / NCTC 10854 / RM-666)</name>
    <dbReference type="NCBI Taxonomy" id="483179"/>
    <lineage>
        <taxon>Bacteria</taxon>
        <taxon>Pseudomonadati</taxon>
        <taxon>Pseudomonadota</taxon>
        <taxon>Alphaproteobacteria</taxon>
        <taxon>Hyphomicrobiales</taxon>
        <taxon>Brucellaceae</taxon>
        <taxon>Brucella/Ochrobactrum group</taxon>
        <taxon>Brucella</taxon>
    </lineage>
</organism>
<sequence length="138" mass="14899">MLKEFQEFALKGNMVDLAIGVIIGGAFGGLVNSIVNDIIMPIIGLITGGIDFSNMFIQLAGDPKTTLAAAREAGATIAYGNFITLLINFLIIAWVLFLVVKLMNRLKKREEAKPAPAAPSEEVLLTEIRDILAKQQKA</sequence>
<accession>A9M8A1</accession>
<feature type="chain" id="PRO_1000076034" description="Large-conductance mechanosensitive channel">
    <location>
        <begin position="1"/>
        <end position="138"/>
    </location>
</feature>
<feature type="transmembrane region" description="Helical" evidence="1">
    <location>
        <begin position="15"/>
        <end position="35"/>
    </location>
</feature>
<feature type="transmembrane region" description="Helical" evidence="1">
    <location>
        <begin position="38"/>
        <end position="58"/>
    </location>
</feature>
<feature type="transmembrane region" description="Helical" evidence="1">
    <location>
        <begin position="80"/>
        <end position="100"/>
    </location>
</feature>
<comment type="function">
    <text evidence="1">Channel that opens in response to stretch forces in the membrane lipid bilayer. May participate in the regulation of osmotic pressure changes within the cell.</text>
</comment>
<comment type="subunit">
    <text evidence="1">Homopentamer.</text>
</comment>
<comment type="subcellular location">
    <subcellularLocation>
        <location evidence="1">Cell inner membrane</location>
        <topology evidence="1">Multi-pass membrane protein</topology>
    </subcellularLocation>
</comment>
<comment type="similarity">
    <text evidence="1">Belongs to the MscL family.</text>
</comment>
<name>MSCL_BRUC2</name>
<proteinExistence type="inferred from homology"/>
<evidence type="ECO:0000255" key="1">
    <source>
        <dbReference type="HAMAP-Rule" id="MF_00115"/>
    </source>
</evidence>
<reference key="1">
    <citation type="submission" date="2007-10" db="EMBL/GenBank/DDBJ databases">
        <title>Brucella canis ATCC 23365 whole genome shotgun sequencing project.</title>
        <authorList>
            <person name="Setubal J.C."/>
            <person name="Bowns C."/>
            <person name="Boyle S."/>
            <person name="Crasta O.R."/>
            <person name="Czar M.J."/>
            <person name="Dharmanolla C."/>
            <person name="Gillespie J.J."/>
            <person name="Kenyon R.W."/>
            <person name="Lu J."/>
            <person name="Mane S."/>
            <person name="Mohapatra S."/>
            <person name="Nagrani S."/>
            <person name="Purkayastha A."/>
            <person name="Rajasimha H.K."/>
            <person name="Shallom J.M."/>
            <person name="Shallom S."/>
            <person name="Shukla M."/>
            <person name="Snyder E.E."/>
            <person name="Sobral B.W."/>
            <person name="Wattam A.R."/>
            <person name="Will R."/>
            <person name="Williams K."/>
            <person name="Yoo H."/>
            <person name="Bruce D."/>
            <person name="Detter C."/>
            <person name="Munk C."/>
            <person name="Brettin T.S."/>
        </authorList>
    </citation>
    <scope>NUCLEOTIDE SEQUENCE [LARGE SCALE GENOMIC DNA]</scope>
    <source>
        <strain>ATCC 23365 / NCTC 10854 / RM-666</strain>
    </source>
</reference>